<proteinExistence type="inferred from homology"/>
<feature type="chain" id="PRO_0000212066" description="Ribosomal RNA small subunit methyltransferase J">
    <location>
        <begin position="1"/>
        <end position="250"/>
    </location>
</feature>
<feature type="binding site" evidence="1">
    <location>
        <begin position="101"/>
        <end position="102"/>
    </location>
    <ligand>
        <name>S-adenosyl-L-methionine</name>
        <dbReference type="ChEBI" id="CHEBI:59789"/>
    </ligand>
</feature>
<feature type="binding site" evidence="1">
    <location>
        <begin position="117"/>
        <end position="118"/>
    </location>
    <ligand>
        <name>S-adenosyl-L-methionine</name>
        <dbReference type="ChEBI" id="CHEBI:59789"/>
    </ligand>
</feature>
<feature type="binding site" evidence="1">
    <location>
        <begin position="153"/>
        <end position="154"/>
    </location>
    <ligand>
        <name>S-adenosyl-L-methionine</name>
        <dbReference type="ChEBI" id="CHEBI:59789"/>
    </ligand>
</feature>
<feature type="binding site" evidence="1">
    <location>
        <position position="171"/>
    </location>
    <ligand>
        <name>S-adenosyl-L-methionine</name>
        <dbReference type="ChEBI" id="CHEBI:59789"/>
    </ligand>
</feature>
<accession>Q8FCL1</accession>
<name>RSMJ_ECOL6</name>
<protein>
    <recommendedName>
        <fullName evidence="1">Ribosomal RNA small subunit methyltransferase J</fullName>
        <ecNumber evidence="1">2.1.1.242</ecNumber>
    </recommendedName>
    <alternativeName>
        <fullName evidence="1">16S rRNA m2G1516 methyltransferase</fullName>
    </alternativeName>
    <alternativeName>
        <fullName evidence="1">rRNA (guanine-N(2)-)-methyltransferase</fullName>
    </alternativeName>
</protein>
<sequence>MKICLIDETGAGDGALSVLAARWGLEHDEDNLMALVLTPEHLELRKRDEPKLGGIFVDFVGGAMAHRRKFGGGRGEAVAKAVGIKGDYLPDVVDATAGLGRDAFVLASVGCRVRMLERNPVVAALLDDGLARGYADAEIGGWLQERLQLIHASSLTALSDITPRPQVVYLDPMFPHKQKSALVKKEMRVFQSLVGPDLDADGLLEPARLLATKRVVVKRPDYAPPLANVATPNAVVTKGHRFDIYAGTPV</sequence>
<dbReference type="EC" id="2.1.1.242" evidence="1"/>
<dbReference type="EMBL" id="AE014075">
    <property type="protein sequence ID" value="AAN82732.1"/>
    <property type="status" value="ALT_INIT"/>
    <property type="molecule type" value="Genomic_DNA"/>
</dbReference>
<dbReference type="RefSeq" id="WP_000686607.1">
    <property type="nucleotide sequence ID" value="NZ_CP051263.1"/>
</dbReference>
<dbReference type="SMR" id="Q8FCL1"/>
<dbReference type="STRING" id="199310.c4296"/>
<dbReference type="KEGG" id="ecc:c4296"/>
<dbReference type="eggNOG" id="COG0742">
    <property type="taxonomic scope" value="Bacteria"/>
</dbReference>
<dbReference type="HOGENOM" id="CLU_076324_0_0_6"/>
<dbReference type="Proteomes" id="UP000001410">
    <property type="component" value="Chromosome"/>
</dbReference>
<dbReference type="GO" id="GO:0005737">
    <property type="term" value="C:cytoplasm"/>
    <property type="evidence" value="ECO:0007669"/>
    <property type="project" value="UniProtKB-SubCell"/>
</dbReference>
<dbReference type="GO" id="GO:0008990">
    <property type="term" value="F:rRNA (guanine-N2-)-methyltransferase activity"/>
    <property type="evidence" value="ECO:0007669"/>
    <property type="project" value="UniProtKB-UniRule"/>
</dbReference>
<dbReference type="CDD" id="cd02440">
    <property type="entry name" value="AdoMet_MTases"/>
    <property type="match status" value="1"/>
</dbReference>
<dbReference type="FunFam" id="3.40.1630.10:FF:000001">
    <property type="entry name" value="Ribosomal RNA small subunit methyltransferase J"/>
    <property type="match status" value="1"/>
</dbReference>
<dbReference type="FunFam" id="3.40.50.150:FF:000072">
    <property type="entry name" value="Ribosomal RNA small subunit methyltransferase J"/>
    <property type="match status" value="1"/>
</dbReference>
<dbReference type="Gene3D" id="3.40.50.150">
    <property type="entry name" value="Vaccinia Virus protein VP39"/>
    <property type="match status" value="1"/>
</dbReference>
<dbReference type="Gene3D" id="3.40.1630.10">
    <property type="entry name" value="YhiQ-like domain"/>
    <property type="match status" value="1"/>
</dbReference>
<dbReference type="HAMAP" id="MF_01523">
    <property type="entry name" value="16SrRNA_methyltr_J"/>
    <property type="match status" value="1"/>
</dbReference>
<dbReference type="InterPro" id="IPR007536">
    <property type="entry name" value="16SrRNA_methylTrfase_J"/>
</dbReference>
<dbReference type="InterPro" id="IPR029063">
    <property type="entry name" value="SAM-dependent_MTases_sf"/>
</dbReference>
<dbReference type="NCBIfam" id="NF008012">
    <property type="entry name" value="PRK10742.1"/>
    <property type="match status" value="1"/>
</dbReference>
<dbReference type="PANTHER" id="PTHR36112">
    <property type="entry name" value="RIBOSOMAL RNA SMALL SUBUNIT METHYLTRANSFERASE J"/>
    <property type="match status" value="1"/>
</dbReference>
<dbReference type="PANTHER" id="PTHR36112:SF1">
    <property type="entry name" value="RIBOSOMAL RNA SMALL SUBUNIT METHYLTRANSFERASE J"/>
    <property type="match status" value="1"/>
</dbReference>
<dbReference type="Pfam" id="PF04445">
    <property type="entry name" value="SAM_MT"/>
    <property type="match status" value="1"/>
</dbReference>
<dbReference type="SUPFAM" id="SSF53335">
    <property type="entry name" value="S-adenosyl-L-methionine-dependent methyltransferases"/>
    <property type="match status" value="1"/>
</dbReference>
<evidence type="ECO:0000255" key="1">
    <source>
        <dbReference type="HAMAP-Rule" id="MF_01523"/>
    </source>
</evidence>
<evidence type="ECO:0000305" key="2"/>
<organism>
    <name type="scientific">Escherichia coli O6:H1 (strain CFT073 / ATCC 700928 / UPEC)</name>
    <dbReference type="NCBI Taxonomy" id="199310"/>
    <lineage>
        <taxon>Bacteria</taxon>
        <taxon>Pseudomonadati</taxon>
        <taxon>Pseudomonadota</taxon>
        <taxon>Gammaproteobacteria</taxon>
        <taxon>Enterobacterales</taxon>
        <taxon>Enterobacteriaceae</taxon>
        <taxon>Escherichia</taxon>
    </lineage>
</organism>
<keyword id="KW-0963">Cytoplasm</keyword>
<keyword id="KW-0489">Methyltransferase</keyword>
<keyword id="KW-1185">Reference proteome</keyword>
<keyword id="KW-0698">rRNA processing</keyword>
<keyword id="KW-0949">S-adenosyl-L-methionine</keyword>
<keyword id="KW-0808">Transferase</keyword>
<comment type="function">
    <text evidence="1">Specifically methylates the guanosine in position 1516 of 16S rRNA.</text>
</comment>
<comment type="catalytic activity">
    <reaction evidence="1">
        <text>guanosine(1516) in 16S rRNA + S-adenosyl-L-methionine = N(2)-methylguanosine(1516) in 16S rRNA + S-adenosyl-L-homocysteine + H(+)</text>
        <dbReference type="Rhea" id="RHEA:43220"/>
        <dbReference type="Rhea" id="RHEA-COMP:10412"/>
        <dbReference type="Rhea" id="RHEA-COMP:10413"/>
        <dbReference type="ChEBI" id="CHEBI:15378"/>
        <dbReference type="ChEBI" id="CHEBI:57856"/>
        <dbReference type="ChEBI" id="CHEBI:59789"/>
        <dbReference type="ChEBI" id="CHEBI:74269"/>
        <dbReference type="ChEBI" id="CHEBI:74481"/>
        <dbReference type="EC" id="2.1.1.242"/>
    </reaction>
</comment>
<comment type="subcellular location">
    <subcellularLocation>
        <location evidence="1">Cytoplasm</location>
    </subcellularLocation>
</comment>
<comment type="similarity">
    <text evidence="1">Belongs to the methyltransferase superfamily. RsmJ family.</text>
</comment>
<comment type="sequence caution" evidence="2">
    <conflict type="erroneous initiation">
        <sequence resource="EMBL-CDS" id="AAN82732"/>
    </conflict>
    <text>Extended N-terminus.</text>
</comment>
<gene>
    <name evidence="1" type="primary">rsmJ</name>
    <name type="synonym">yhiQ</name>
    <name type="ordered locus">c4296</name>
</gene>
<reference key="1">
    <citation type="journal article" date="2002" name="Proc. Natl. Acad. Sci. U.S.A.">
        <title>Extensive mosaic structure revealed by the complete genome sequence of uropathogenic Escherichia coli.</title>
        <authorList>
            <person name="Welch R.A."/>
            <person name="Burland V."/>
            <person name="Plunkett G. III"/>
            <person name="Redford P."/>
            <person name="Roesch P."/>
            <person name="Rasko D."/>
            <person name="Buckles E.L."/>
            <person name="Liou S.-R."/>
            <person name="Boutin A."/>
            <person name="Hackett J."/>
            <person name="Stroud D."/>
            <person name="Mayhew G.F."/>
            <person name="Rose D.J."/>
            <person name="Zhou S."/>
            <person name="Schwartz D.C."/>
            <person name="Perna N.T."/>
            <person name="Mobley H.L.T."/>
            <person name="Donnenberg M.S."/>
            <person name="Blattner F.R."/>
        </authorList>
    </citation>
    <scope>NUCLEOTIDE SEQUENCE [LARGE SCALE GENOMIC DNA]</scope>
    <source>
        <strain>CFT073 / ATCC 700928 / UPEC</strain>
    </source>
</reference>